<accession>B5QYD4</accession>
<proteinExistence type="inferred from homology"/>
<reference key="1">
    <citation type="journal article" date="2008" name="Genome Res.">
        <title>Comparative genome analysis of Salmonella enteritidis PT4 and Salmonella gallinarum 287/91 provides insights into evolutionary and host adaptation pathways.</title>
        <authorList>
            <person name="Thomson N.R."/>
            <person name="Clayton D.J."/>
            <person name="Windhorst D."/>
            <person name="Vernikos G."/>
            <person name="Davidson S."/>
            <person name="Churcher C."/>
            <person name="Quail M.A."/>
            <person name="Stevens M."/>
            <person name="Jones M.A."/>
            <person name="Watson M."/>
            <person name="Barron A."/>
            <person name="Layton A."/>
            <person name="Pickard D."/>
            <person name="Kingsley R.A."/>
            <person name="Bignell A."/>
            <person name="Clark L."/>
            <person name="Harris B."/>
            <person name="Ormond D."/>
            <person name="Abdellah Z."/>
            <person name="Brooks K."/>
            <person name="Cherevach I."/>
            <person name="Chillingworth T."/>
            <person name="Woodward J."/>
            <person name="Norberczak H."/>
            <person name="Lord A."/>
            <person name="Arrowsmith C."/>
            <person name="Jagels K."/>
            <person name="Moule S."/>
            <person name="Mungall K."/>
            <person name="Saunders M."/>
            <person name="Whitehead S."/>
            <person name="Chabalgoity J.A."/>
            <person name="Maskell D."/>
            <person name="Humphreys T."/>
            <person name="Roberts M."/>
            <person name="Barrow P.A."/>
            <person name="Dougan G."/>
            <person name="Parkhill J."/>
        </authorList>
    </citation>
    <scope>NUCLEOTIDE SEQUENCE [LARGE SCALE GENOMIC DNA]</scope>
    <source>
        <strain>P125109</strain>
    </source>
</reference>
<organism>
    <name type="scientific">Salmonella enteritidis PT4 (strain P125109)</name>
    <dbReference type="NCBI Taxonomy" id="550537"/>
    <lineage>
        <taxon>Bacteria</taxon>
        <taxon>Pseudomonadati</taxon>
        <taxon>Pseudomonadota</taxon>
        <taxon>Gammaproteobacteria</taxon>
        <taxon>Enterobacterales</taxon>
        <taxon>Enterobacteriaceae</taxon>
        <taxon>Salmonella</taxon>
    </lineage>
</organism>
<protein>
    <recommendedName>
        <fullName evidence="1">Large ribosomal subunit protein uL11</fullName>
    </recommendedName>
    <alternativeName>
        <fullName evidence="2">50S ribosomal protein L11</fullName>
    </alternativeName>
</protein>
<evidence type="ECO:0000255" key="1">
    <source>
        <dbReference type="HAMAP-Rule" id="MF_00736"/>
    </source>
</evidence>
<evidence type="ECO:0000305" key="2"/>
<comment type="function">
    <text evidence="1">Forms part of the ribosomal stalk which helps the ribosome interact with GTP-bound translation factors.</text>
</comment>
<comment type="subunit">
    <text evidence="1">Part of the ribosomal stalk of the 50S ribosomal subunit. Interacts with L10 and the large rRNA to form the base of the stalk. L10 forms an elongated spine to which L12 dimers bind in a sequential fashion forming a multimeric L10(L12)X complex.</text>
</comment>
<comment type="PTM">
    <text evidence="1">One or more lysine residues are methylated.</text>
</comment>
<comment type="similarity">
    <text evidence="1">Belongs to the universal ribosomal protein uL11 family.</text>
</comment>
<name>RL11_SALEP</name>
<keyword id="KW-0488">Methylation</keyword>
<keyword id="KW-0687">Ribonucleoprotein</keyword>
<keyword id="KW-0689">Ribosomal protein</keyword>
<keyword id="KW-0694">RNA-binding</keyword>
<keyword id="KW-0699">rRNA-binding</keyword>
<feature type="chain" id="PRO_1000195706" description="Large ribosomal subunit protein uL11">
    <location>
        <begin position="1"/>
        <end position="142"/>
    </location>
</feature>
<sequence>MAKKVQAYVKLQVAAGMANPSPPVGPALGQQGVNIMEFCKAFNAKTDSIEKGLPIPVVITVYADRSFTFVTKTPPAAVLLKKAAGIKSGSGKPNKDKVGKISRAQLQEIAQTKAADMTGADIEAMTRSIEGTARSMGLVVED</sequence>
<gene>
    <name evidence="1" type="primary">rplK</name>
    <name type="ordered locus">SEN3933</name>
</gene>
<dbReference type="EMBL" id="AM933172">
    <property type="protein sequence ID" value="CAR35504.1"/>
    <property type="molecule type" value="Genomic_DNA"/>
</dbReference>
<dbReference type="RefSeq" id="WP_001085926.1">
    <property type="nucleotide sequence ID" value="NC_011294.1"/>
</dbReference>
<dbReference type="SMR" id="B5QYD4"/>
<dbReference type="GeneID" id="93777911"/>
<dbReference type="KEGG" id="set:SEN3933"/>
<dbReference type="HOGENOM" id="CLU_074237_2_0_6"/>
<dbReference type="Proteomes" id="UP000000613">
    <property type="component" value="Chromosome"/>
</dbReference>
<dbReference type="GO" id="GO:0022625">
    <property type="term" value="C:cytosolic large ribosomal subunit"/>
    <property type="evidence" value="ECO:0007669"/>
    <property type="project" value="TreeGrafter"/>
</dbReference>
<dbReference type="GO" id="GO:0070180">
    <property type="term" value="F:large ribosomal subunit rRNA binding"/>
    <property type="evidence" value="ECO:0007669"/>
    <property type="project" value="UniProtKB-UniRule"/>
</dbReference>
<dbReference type="GO" id="GO:0003735">
    <property type="term" value="F:structural constituent of ribosome"/>
    <property type="evidence" value="ECO:0007669"/>
    <property type="project" value="InterPro"/>
</dbReference>
<dbReference type="GO" id="GO:0006412">
    <property type="term" value="P:translation"/>
    <property type="evidence" value="ECO:0007669"/>
    <property type="project" value="UniProtKB-UniRule"/>
</dbReference>
<dbReference type="CDD" id="cd00349">
    <property type="entry name" value="Ribosomal_L11"/>
    <property type="match status" value="1"/>
</dbReference>
<dbReference type="FunFam" id="1.10.10.250:FF:000001">
    <property type="entry name" value="50S ribosomal protein L11"/>
    <property type="match status" value="1"/>
</dbReference>
<dbReference type="FunFam" id="3.30.1550.10:FF:000001">
    <property type="entry name" value="50S ribosomal protein L11"/>
    <property type="match status" value="1"/>
</dbReference>
<dbReference type="Gene3D" id="1.10.10.250">
    <property type="entry name" value="Ribosomal protein L11, C-terminal domain"/>
    <property type="match status" value="1"/>
</dbReference>
<dbReference type="Gene3D" id="3.30.1550.10">
    <property type="entry name" value="Ribosomal protein L11/L12, N-terminal domain"/>
    <property type="match status" value="1"/>
</dbReference>
<dbReference type="HAMAP" id="MF_00736">
    <property type="entry name" value="Ribosomal_uL11"/>
    <property type="match status" value="1"/>
</dbReference>
<dbReference type="InterPro" id="IPR000911">
    <property type="entry name" value="Ribosomal_uL11"/>
</dbReference>
<dbReference type="InterPro" id="IPR006519">
    <property type="entry name" value="Ribosomal_uL11_bac-typ"/>
</dbReference>
<dbReference type="InterPro" id="IPR020783">
    <property type="entry name" value="Ribosomal_uL11_C"/>
</dbReference>
<dbReference type="InterPro" id="IPR036769">
    <property type="entry name" value="Ribosomal_uL11_C_sf"/>
</dbReference>
<dbReference type="InterPro" id="IPR020785">
    <property type="entry name" value="Ribosomal_uL11_CS"/>
</dbReference>
<dbReference type="InterPro" id="IPR020784">
    <property type="entry name" value="Ribosomal_uL11_N"/>
</dbReference>
<dbReference type="InterPro" id="IPR036796">
    <property type="entry name" value="Ribosomal_uL11_N_sf"/>
</dbReference>
<dbReference type="NCBIfam" id="TIGR01632">
    <property type="entry name" value="L11_bact"/>
    <property type="match status" value="1"/>
</dbReference>
<dbReference type="PANTHER" id="PTHR11661">
    <property type="entry name" value="60S RIBOSOMAL PROTEIN L12"/>
    <property type="match status" value="1"/>
</dbReference>
<dbReference type="PANTHER" id="PTHR11661:SF1">
    <property type="entry name" value="LARGE RIBOSOMAL SUBUNIT PROTEIN UL11M"/>
    <property type="match status" value="1"/>
</dbReference>
<dbReference type="Pfam" id="PF00298">
    <property type="entry name" value="Ribosomal_L11"/>
    <property type="match status" value="1"/>
</dbReference>
<dbReference type="Pfam" id="PF03946">
    <property type="entry name" value="Ribosomal_L11_N"/>
    <property type="match status" value="1"/>
</dbReference>
<dbReference type="SMART" id="SM00649">
    <property type="entry name" value="RL11"/>
    <property type="match status" value="1"/>
</dbReference>
<dbReference type="SUPFAM" id="SSF54747">
    <property type="entry name" value="Ribosomal L11/L12e N-terminal domain"/>
    <property type="match status" value="1"/>
</dbReference>
<dbReference type="SUPFAM" id="SSF46906">
    <property type="entry name" value="Ribosomal protein L11, C-terminal domain"/>
    <property type="match status" value="1"/>
</dbReference>
<dbReference type="PROSITE" id="PS00359">
    <property type="entry name" value="RIBOSOMAL_L11"/>
    <property type="match status" value="1"/>
</dbReference>